<dbReference type="EC" id="6.3.2.4" evidence="2"/>
<dbReference type="EMBL" id="AF179611">
    <property type="protein sequence ID" value="AAD53933.1"/>
    <property type="molecule type" value="Genomic_DNA"/>
</dbReference>
<dbReference type="EMBL" id="AE008692">
    <property type="protein sequence ID" value="AAV89458.1"/>
    <property type="molecule type" value="Genomic_DNA"/>
</dbReference>
<dbReference type="RefSeq" id="WP_011240704.1">
    <property type="nucleotide sequence ID" value="NZ_CP035711.1"/>
</dbReference>
<dbReference type="SMR" id="Q9RNM9"/>
<dbReference type="STRING" id="264203.ZMO0834"/>
<dbReference type="KEGG" id="zmo:ZMO0834"/>
<dbReference type="eggNOG" id="COG1181">
    <property type="taxonomic scope" value="Bacteria"/>
</dbReference>
<dbReference type="HOGENOM" id="CLU_039268_1_1_5"/>
<dbReference type="UniPathway" id="UPA00219"/>
<dbReference type="Proteomes" id="UP000001173">
    <property type="component" value="Chromosome"/>
</dbReference>
<dbReference type="GO" id="GO:0005737">
    <property type="term" value="C:cytoplasm"/>
    <property type="evidence" value="ECO:0007669"/>
    <property type="project" value="UniProtKB-SubCell"/>
</dbReference>
<dbReference type="GO" id="GO:0005524">
    <property type="term" value="F:ATP binding"/>
    <property type="evidence" value="ECO:0007669"/>
    <property type="project" value="UniProtKB-KW"/>
</dbReference>
<dbReference type="GO" id="GO:0008716">
    <property type="term" value="F:D-alanine-D-alanine ligase activity"/>
    <property type="evidence" value="ECO:0007669"/>
    <property type="project" value="UniProtKB-UniRule"/>
</dbReference>
<dbReference type="GO" id="GO:0046872">
    <property type="term" value="F:metal ion binding"/>
    <property type="evidence" value="ECO:0007669"/>
    <property type="project" value="UniProtKB-KW"/>
</dbReference>
<dbReference type="GO" id="GO:0071555">
    <property type="term" value="P:cell wall organization"/>
    <property type="evidence" value="ECO:0007669"/>
    <property type="project" value="UniProtKB-KW"/>
</dbReference>
<dbReference type="GO" id="GO:0009252">
    <property type="term" value="P:peptidoglycan biosynthetic process"/>
    <property type="evidence" value="ECO:0007669"/>
    <property type="project" value="UniProtKB-UniRule"/>
</dbReference>
<dbReference type="GO" id="GO:0008360">
    <property type="term" value="P:regulation of cell shape"/>
    <property type="evidence" value="ECO:0007669"/>
    <property type="project" value="UniProtKB-KW"/>
</dbReference>
<dbReference type="Gene3D" id="3.40.50.20">
    <property type="match status" value="1"/>
</dbReference>
<dbReference type="Gene3D" id="3.30.1490.20">
    <property type="entry name" value="ATP-grasp fold, A domain"/>
    <property type="match status" value="1"/>
</dbReference>
<dbReference type="Gene3D" id="3.30.470.20">
    <property type="entry name" value="ATP-grasp fold, B domain"/>
    <property type="match status" value="1"/>
</dbReference>
<dbReference type="HAMAP" id="MF_00047">
    <property type="entry name" value="Dala_Dala_lig"/>
    <property type="match status" value="1"/>
</dbReference>
<dbReference type="InterPro" id="IPR011761">
    <property type="entry name" value="ATP-grasp"/>
</dbReference>
<dbReference type="InterPro" id="IPR013815">
    <property type="entry name" value="ATP_grasp_subdomain_1"/>
</dbReference>
<dbReference type="InterPro" id="IPR000291">
    <property type="entry name" value="D-Ala_lig_Van_CS"/>
</dbReference>
<dbReference type="InterPro" id="IPR005905">
    <property type="entry name" value="D_ala_D_ala"/>
</dbReference>
<dbReference type="InterPro" id="IPR011095">
    <property type="entry name" value="Dala_Dala_lig_C"/>
</dbReference>
<dbReference type="InterPro" id="IPR011127">
    <property type="entry name" value="Dala_Dala_lig_N"/>
</dbReference>
<dbReference type="InterPro" id="IPR016185">
    <property type="entry name" value="PreATP-grasp_dom_sf"/>
</dbReference>
<dbReference type="NCBIfam" id="TIGR01205">
    <property type="entry name" value="D_ala_D_alaTIGR"/>
    <property type="match status" value="1"/>
</dbReference>
<dbReference type="NCBIfam" id="NF002378">
    <property type="entry name" value="PRK01372.1"/>
    <property type="match status" value="1"/>
</dbReference>
<dbReference type="PANTHER" id="PTHR23132">
    <property type="entry name" value="D-ALANINE--D-ALANINE LIGASE"/>
    <property type="match status" value="1"/>
</dbReference>
<dbReference type="PANTHER" id="PTHR23132:SF23">
    <property type="entry name" value="D-ALANINE--D-ALANINE LIGASE B"/>
    <property type="match status" value="1"/>
</dbReference>
<dbReference type="Pfam" id="PF07478">
    <property type="entry name" value="Dala_Dala_lig_C"/>
    <property type="match status" value="1"/>
</dbReference>
<dbReference type="Pfam" id="PF01820">
    <property type="entry name" value="Dala_Dala_lig_N"/>
    <property type="match status" value="1"/>
</dbReference>
<dbReference type="PIRSF" id="PIRSF039102">
    <property type="entry name" value="Ddl/VanB"/>
    <property type="match status" value="1"/>
</dbReference>
<dbReference type="SUPFAM" id="SSF56059">
    <property type="entry name" value="Glutathione synthetase ATP-binding domain-like"/>
    <property type="match status" value="1"/>
</dbReference>
<dbReference type="SUPFAM" id="SSF52440">
    <property type="entry name" value="PreATP-grasp domain"/>
    <property type="match status" value="1"/>
</dbReference>
<dbReference type="PROSITE" id="PS50975">
    <property type="entry name" value="ATP_GRASP"/>
    <property type="match status" value="1"/>
</dbReference>
<dbReference type="PROSITE" id="PS00843">
    <property type="entry name" value="DALA_DALA_LIGASE_1"/>
    <property type="match status" value="1"/>
</dbReference>
<dbReference type="PROSITE" id="PS00844">
    <property type="entry name" value="DALA_DALA_LIGASE_2"/>
    <property type="match status" value="1"/>
</dbReference>
<accession>Q9RNM9</accession>
<accession>Q5NPA2</accession>
<reference key="1">
    <citation type="submission" date="1999-08" db="EMBL/GenBank/DDBJ databases">
        <title>Sequence analysis of 41E10 fosmid clone of Zymomonas mobilis.</title>
        <authorList>
            <person name="Um H.W."/>
            <person name="Kang H.S."/>
        </authorList>
    </citation>
    <scope>NUCLEOTIDE SEQUENCE [GENOMIC DNA]</scope>
    <source>
        <strain>ATCC 31821 / ZM4 / CP4</strain>
    </source>
</reference>
<reference key="2">
    <citation type="journal article" date="2005" name="Nat. Biotechnol.">
        <title>The genome sequence of the ethanologenic bacterium Zymomonas mobilis ZM4.</title>
        <authorList>
            <person name="Seo J.-S."/>
            <person name="Chong H."/>
            <person name="Park H.S."/>
            <person name="Yoon K.-O."/>
            <person name="Jung C."/>
            <person name="Kim J.J."/>
            <person name="Hong J.H."/>
            <person name="Kim H."/>
            <person name="Kim J.-H."/>
            <person name="Kil J.-I."/>
            <person name="Park C.J."/>
            <person name="Oh H.-M."/>
            <person name="Lee J.-S."/>
            <person name="Jin S.-J."/>
            <person name="Um H.-W."/>
            <person name="Lee H.-J."/>
            <person name="Oh S.-J."/>
            <person name="Kim J.Y."/>
            <person name="Kang H.L."/>
            <person name="Lee S.Y."/>
            <person name="Lee K.J."/>
            <person name="Kang H.S."/>
        </authorList>
    </citation>
    <scope>NUCLEOTIDE SEQUENCE [LARGE SCALE GENOMIC DNA]</scope>
    <source>
        <strain>ATCC 31821 / ZM4 / CP4</strain>
    </source>
</reference>
<sequence>MSDKKHVVVLMGGWSSEREISLLSGRHVGKALEEAGYRVTLLDMDRDIAFKLREAKPDVVFNALHGTPGEDGSIQGLMDLMAIRYTHSGLTASAIAIDKELTKKILTPENIPMPQGCLVERESLYTKDPLPRPYVLKPVNEGSSVGVAIIDESFNDGQPIRKDQIDPWKNFKTLLAEPFIKGRELTVAVMGDKALAVTELCPNNGFYDYKAKYTDGMTTHICPAKIPAEIAEKAMALSLKAHQLLGCRGPSRSDFRWDDEAGLDGLFLLEVNTQPGMTPLSLVPEQAKQLGIDYVALCRMIVEEALAEDTLQETKMAGQGG</sequence>
<name>DDL_ZYMMO</name>
<proteinExistence type="inferred from homology"/>
<protein>
    <recommendedName>
        <fullName evidence="2">D-alanine--D-alanine ligase</fullName>
        <ecNumber evidence="2">6.3.2.4</ecNumber>
    </recommendedName>
    <alternativeName>
        <fullName evidence="2">D-Ala-D-Ala ligase</fullName>
    </alternativeName>
    <alternativeName>
        <fullName evidence="2">D-alanylalanine synthetase</fullName>
    </alternativeName>
</protein>
<comment type="function">
    <text evidence="2">Cell wall formation.</text>
</comment>
<comment type="catalytic activity">
    <reaction evidence="2">
        <text>2 D-alanine + ATP = D-alanyl-D-alanine + ADP + phosphate + H(+)</text>
        <dbReference type="Rhea" id="RHEA:11224"/>
        <dbReference type="ChEBI" id="CHEBI:15378"/>
        <dbReference type="ChEBI" id="CHEBI:30616"/>
        <dbReference type="ChEBI" id="CHEBI:43474"/>
        <dbReference type="ChEBI" id="CHEBI:57416"/>
        <dbReference type="ChEBI" id="CHEBI:57822"/>
        <dbReference type="ChEBI" id="CHEBI:456216"/>
        <dbReference type="EC" id="6.3.2.4"/>
    </reaction>
</comment>
<comment type="cofactor">
    <cofactor evidence="1">
        <name>Mg(2+)</name>
        <dbReference type="ChEBI" id="CHEBI:18420"/>
    </cofactor>
    <cofactor evidence="1">
        <name>Mn(2+)</name>
        <dbReference type="ChEBI" id="CHEBI:29035"/>
    </cofactor>
    <text evidence="1">Binds 2 magnesium or manganese ions per subunit.</text>
</comment>
<comment type="pathway">
    <text evidence="2">Cell wall biogenesis; peptidoglycan biosynthesis.</text>
</comment>
<comment type="subcellular location">
    <subcellularLocation>
        <location evidence="2">Cytoplasm</location>
    </subcellularLocation>
</comment>
<comment type="similarity">
    <text evidence="2">Belongs to the D-alanine--D-alanine ligase family.</text>
</comment>
<organism>
    <name type="scientific">Zymomonas mobilis subsp. mobilis (strain ATCC 31821 / ZM4 / CP4)</name>
    <dbReference type="NCBI Taxonomy" id="264203"/>
    <lineage>
        <taxon>Bacteria</taxon>
        <taxon>Pseudomonadati</taxon>
        <taxon>Pseudomonadota</taxon>
        <taxon>Alphaproteobacteria</taxon>
        <taxon>Sphingomonadales</taxon>
        <taxon>Zymomonadaceae</taxon>
        <taxon>Zymomonas</taxon>
    </lineage>
</organism>
<gene>
    <name evidence="2" type="primary">ddl</name>
    <name type="ordered locus">ZMO0834</name>
</gene>
<keyword id="KW-0067">ATP-binding</keyword>
<keyword id="KW-0133">Cell shape</keyword>
<keyword id="KW-0961">Cell wall biogenesis/degradation</keyword>
<keyword id="KW-0963">Cytoplasm</keyword>
<keyword id="KW-0436">Ligase</keyword>
<keyword id="KW-0460">Magnesium</keyword>
<keyword id="KW-0464">Manganese</keyword>
<keyword id="KW-0479">Metal-binding</keyword>
<keyword id="KW-0547">Nucleotide-binding</keyword>
<keyword id="KW-0573">Peptidoglycan synthesis</keyword>
<keyword id="KW-1185">Reference proteome</keyword>
<evidence type="ECO:0000250" key="1"/>
<evidence type="ECO:0000255" key="2">
    <source>
        <dbReference type="HAMAP-Rule" id="MF_00047"/>
    </source>
</evidence>
<feature type="chain" id="PRO_0000341197" description="D-alanine--D-alanine ligase">
    <location>
        <begin position="1"/>
        <end position="321"/>
    </location>
</feature>
<feature type="domain" description="ATP-grasp" evidence="2">
    <location>
        <begin position="103"/>
        <end position="303"/>
    </location>
</feature>
<feature type="binding site" evidence="2">
    <location>
        <begin position="129"/>
        <end position="186"/>
    </location>
    <ligand>
        <name>ATP</name>
        <dbReference type="ChEBI" id="CHEBI:30616"/>
    </ligand>
</feature>
<feature type="binding site" evidence="2">
    <location>
        <position position="254"/>
    </location>
    <ligand>
        <name>Mg(2+)</name>
        <dbReference type="ChEBI" id="CHEBI:18420"/>
        <label>1</label>
    </ligand>
</feature>
<feature type="binding site" evidence="2">
    <location>
        <position position="270"/>
    </location>
    <ligand>
        <name>Mg(2+)</name>
        <dbReference type="ChEBI" id="CHEBI:18420"/>
        <label>1</label>
    </ligand>
</feature>
<feature type="binding site" evidence="2">
    <location>
        <position position="270"/>
    </location>
    <ligand>
        <name>Mg(2+)</name>
        <dbReference type="ChEBI" id="CHEBI:18420"/>
        <label>2</label>
    </ligand>
</feature>
<feature type="binding site" evidence="2">
    <location>
        <position position="272"/>
    </location>
    <ligand>
        <name>Mg(2+)</name>
        <dbReference type="ChEBI" id="CHEBI:18420"/>
        <label>2</label>
    </ligand>
</feature>